<gene>
    <name type="primary">ECM33</name>
    <name type="ORF">C1Q_02579</name>
</gene>
<comment type="function">
    <text evidence="1">Required for proper cell wall integrity and for the correct assembly of the mannoprotein outer layer of the cell wall. Important for apical bud growth (By similarity).</text>
</comment>
<comment type="subcellular location">
    <subcellularLocation>
        <location evidence="1">Cell membrane</location>
        <topology evidence="1">Lipid-anchor</topology>
        <topology evidence="1">GPI-anchor</topology>
    </subcellularLocation>
    <subcellularLocation>
        <location evidence="1">Secreted</location>
        <location evidence="1">Cell wall</location>
    </subcellularLocation>
    <text evidence="1">Identified as GPI-anchored plasma membrane protein (GPI-PMP) as well as covalently-linked GPI-modified cell wall protein (GPI-CWP) in the outer cell wall layer.</text>
</comment>
<comment type="PTM">
    <text evidence="1">The GPI-anchor is attached to the protein in the endoplasmic reticulum and serves to target the protein to the cell surface. There, the glucosamine-inositol phospholipid moiety is cleaved off and the GPI-modified mannoprotein is covalently attached via its lipidless GPI glycan remnant to the 1,6-beta-glucan of the outer cell wall layer (By similarity).</text>
</comment>
<comment type="similarity">
    <text evidence="5">Belongs to the SPS2 family.</text>
</comment>
<sequence>MQFKNALTATAILSASALAGTNSTTSIPSSCSIGTSATATAQADLDKISGCSTIVGNLTITGDLGSAALASIQEIDGSLTIFNSSSLSSFSADSIKKITGDLNMQELIILTSASFGSLQEVDSINMVTLPAISTFSTDLQNANNIIVSDTTLESVEGFSTLKKVNVFNINNNRYLNSFQSSLESVSDSLQFSSNGDNTTLAFDNLVWANNITLRDVNSISFGSLQTVNASLGFINNTLPSLNLTQLSKVGQSLSIVSNDELSKAAFSNLTTVGGGFIIANNTQLKVIDGFNKVQTVGGAIEVTGNFSTLDLSSLKSVRGGANFDSSSSNFSCNALKKLQSNGAIQGDSFVCKNGATSTSVKLSSTSTESSKSSATSSASSSGDASNAQASVSASASSSSSSSKKSKGAAPELVPATSFMGVVAAVAVALL</sequence>
<protein>
    <recommendedName>
        <fullName>Cell wall protein ECM33</fullName>
    </recommendedName>
    <alternativeName>
        <fullName>Extracellular mutant protein 33</fullName>
    </alternativeName>
</protein>
<feature type="signal peptide" evidence="3">
    <location>
        <begin position="1"/>
        <end position="19"/>
    </location>
</feature>
<feature type="chain" id="PRO_0000392090" description="Cell wall protein ECM33">
    <location>
        <begin position="20"/>
        <end position="407"/>
    </location>
</feature>
<feature type="propeptide" id="PRO_0000392091" description="Removed in mature form" evidence="3">
    <location>
        <begin position="408"/>
        <end position="430"/>
    </location>
</feature>
<feature type="region of interest" description="Disordered" evidence="4">
    <location>
        <begin position="362"/>
        <end position="411"/>
    </location>
</feature>
<feature type="compositionally biased region" description="Low complexity" evidence="4">
    <location>
        <begin position="362"/>
        <end position="402"/>
    </location>
</feature>
<feature type="modified residue" description="Phosphoserine" evidence="2">
    <location>
        <position position="340"/>
    </location>
</feature>
<feature type="lipid moiety-binding region" description="GPI-anchor amidated glycine" evidence="3">
    <location>
        <position position="407"/>
    </location>
</feature>
<feature type="glycosylation site" description="N-linked (GlcNAc...) asparagine" evidence="3">
    <location>
        <position position="22"/>
    </location>
</feature>
<feature type="glycosylation site" description="N-linked (GlcNAc...) asparagine" evidence="3">
    <location>
        <position position="57"/>
    </location>
</feature>
<feature type="glycosylation site" description="N-linked (GlcNAc...) asparagine" evidence="3">
    <location>
        <position position="83"/>
    </location>
</feature>
<feature type="glycosylation site" description="N-linked (GlcNAc...) asparagine" evidence="3">
    <location>
        <position position="197"/>
    </location>
</feature>
<feature type="glycosylation site" description="N-linked (GlcNAc...) asparagine" evidence="3">
    <location>
        <position position="210"/>
    </location>
</feature>
<feature type="glycosylation site" description="N-linked (GlcNAc...) asparagine" evidence="3">
    <location>
        <position position="228"/>
    </location>
</feature>
<feature type="glycosylation site" description="N-linked (GlcNAc...) asparagine" evidence="3">
    <location>
        <position position="235"/>
    </location>
</feature>
<feature type="glycosylation site" description="N-linked (GlcNAc...) asparagine" evidence="3">
    <location>
        <position position="242"/>
    </location>
</feature>
<feature type="glycosylation site" description="N-linked (GlcNAc...) asparagine" evidence="3">
    <location>
        <position position="268"/>
    </location>
</feature>
<feature type="glycosylation site" description="N-linked (GlcNAc...) asparagine" evidence="3">
    <location>
        <position position="280"/>
    </location>
</feature>
<feature type="glycosylation site" description="N-linked (GlcNAc...) asparagine" evidence="3">
    <location>
        <position position="305"/>
    </location>
</feature>
<feature type="glycosylation site" description="N-linked (GlcNAc...) asparagine" evidence="3">
    <location>
        <position position="329"/>
    </location>
</feature>
<proteinExistence type="inferred from homology"/>
<dbReference type="EMBL" id="ACFL01000124">
    <property type="protein sequence ID" value="EEU06930.1"/>
    <property type="molecule type" value="Genomic_DNA"/>
</dbReference>
<dbReference type="SMR" id="C7GQJ1"/>
<dbReference type="GlyCosmos" id="C7GQJ1">
    <property type="glycosylation" value="12 sites, No reported glycans"/>
</dbReference>
<dbReference type="OrthoDB" id="37283at4893"/>
<dbReference type="Proteomes" id="UP000008073">
    <property type="component" value="Unassembled WGS sequence"/>
</dbReference>
<dbReference type="GO" id="GO:0005576">
    <property type="term" value="C:extracellular region"/>
    <property type="evidence" value="ECO:0007669"/>
    <property type="project" value="UniProtKB-KW"/>
</dbReference>
<dbReference type="GO" id="GO:0005886">
    <property type="term" value="C:plasma membrane"/>
    <property type="evidence" value="ECO:0007669"/>
    <property type="project" value="UniProtKB-SubCell"/>
</dbReference>
<dbReference type="GO" id="GO:0098552">
    <property type="term" value="C:side of membrane"/>
    <property type="evidence" value="ECO:0007669"/>
    <property type="project" value="UniProtKB-KW"/>
</dbReference>
<dbReference type="GO" id="GO:0071555">
    <property type="term" value="P:cell wall organization"/>
    <property type="evidence" value="ECO:0007669"/>
    <property type="project" value="UniProtKB-KW"/>
</dbReference>
<dbReference type="FunFam" id="3.80.20.20:FF:000016">
    <property type="entry name" value="Cell wall protein ECM33"/>
    <property type="match status" value="1"/>
</dbReference>
<dbReference type="Gene3D" id="3.80.20.20">
    <property type="entry name" value="Receptor L-domain"/>
    <property type="match status" value="1"/>
</dbReference>
<dbReference type="InterPro" id="IPR051648">
    <property type="entry name" value="CWI-Assembly_Regulator"/>
</dbReference>
<dbReference type="InterPro" id="IPR036941">
    <property type="entry name" value="Rcpt_L-dom_sf"/>
</dbReference>
<dbReference type="PANTHER" id="PTHR31018:SF3">
    <property type="entry name" value="RECEPTOR PROTEIN-TYROSINE KINASE"/>
    <property type="match status" value="1"/>
</dbReference>
<dbReference type="PANTHER" id="PTHR31018">
    <property type="entry name" value="SPORULATION-SPECIFIC PROTEIN-RELATED"/>
    <property type="match status" value="1"/>
</dbReference>
<dbReference type="SUPFAM" id="SSF52058">
    <property type="entry name" value="L domain-like"/>
    <property type="match status" value="1"/>
</dbReference>
<accession>C7GQJ1</accession>
<organism>
    <name type="scientific">Saccharomyces cerevisiae (strain JAY291)</name>
    <name type="common">Baker's yeast</name>
    <dbReference type="NCBI Taxonomy" id="574961"/>
    <lineage>
        <taxon>Eukaryota</taxon>
        <taxon>Fungi</taxon>
        <taxon>Dikarya</taxon>
        <taxon>Ascomycota</taxon>
        <taxon>Saccharomycotina</taxon>
        <taxon>Saccharomycetes</taxon>
        <taxon>Saccharomycetales</taxon>
        <taxon>Saccharomycetaceae</taxon>
        <taxon>Saccharomyces</taxon>
    </lineage>
</organism>
<reference key="1">
    <citation type="journal article" date="2009" name="Genome Res.">
        <title>Genome structure of a Saccharomyces cerevisiae strain widely used in bioethanol production.</title>
        <authorList>
            <person name="Argueso J.L."/>
            <person name="Carazzolle M.F."/>
            <person name="Mieczkowski P.A."/>
            <person name="Duarte F.M."/>
            <person name="Netto O.V.C."/>
            <person name="Missawa S.K."/>
            <person name="Galzerani F."/>
            <person name="Costa G.G.L."/>
            <person name="Vidal R.O."/>
            <person name="Noronha M.F."/>
            <person name="Dominska M."/>
            <person name="Andrietta M.G.S."/>
            <person name="Andrietta S.R."/>
            <person name="Cunha A.F."/>
            <person name="Gomes L.H."/>
            <person name="Tavares F.C.A."/>
            <person name="Alcarde A.R."/>
            <person name="Dietrich F.S."/>
            <person name="McCusker J.H."/>
            <person name="Petes T.D."/>
            <person name="Pereira G.A.G."/>
        </authorList>
    </citation>
    <scope>NUCLEOTIDE SEQUENCE [LARGE SCALE GENOMIC DNA]</scope>
    <source>
        <strain>JAY291</strain>
    </source>
</reference>
<name>ECM33_YEAS2</name>
<evidence type="ECO:0000250" key="1"/>
<evidence type="ECO:0000250" key="2">
    <source>
        <dbReference type="UniProtKB" id="P38248"/>
    </source>
</evidence>
<evidence type="ECO:0000255" key="3"/>
<evidence type="ECO:0000256" key="4">
    <source>
        <dbReference type="SAM" id="MobiDB-lite"/>
    </source>
</evidence>
<evidence type="ECO:0000305" key="5"/>
<keyword id="KW-1003">Cell membrane</keyword>
<keyword id="KW-0134">Cell wall</keyword>
<keyword id="KW-0961">Cell wall biogenesis/degradation</keyword>
<keyword id="KW-0325">Glycoprotein</keyword>
<keyword id="KW-0336">GPI-anchor</keyword>
<keyword id="KW-0449">Lipoprotein</keyword>
<keyword id="KW-0472">Membrane</keyword>
<keyword id="KW-0597">Phosphoprotein</keyword>
<keyword id="KW-0964">Secreted</keyword>
<keyword id="KW-0732">Signal</keyword>